<gene>
    <name type="primary">ymgE</name>
    <name evidence="2" type="synonym">tag</name>
    <name type="ordered locus">E2348C_1314</name>
</gene>
<accession>P58767</accession>
<accession>B7UQ79</accession>
<dbReference type="EMBL" id="U85771">
    <property type="protein sequence ID" value="AAB42090.1"/>
    <property type="molecule type" value="Genomic_DNA"/>
</dbReference>
<dbReference type="EMBL" id="FM180568">
    <property type="protein sequence ID" value="CAS08862.1"/>
    <property type="molecule type" value="Genomic_DNA"/>
</dbReference>
<dbReference type="RefSeq" id="WP_001339588.1">
    <property type="nucleotide sequence ID" value="NC_011601.1"/>
</dbReference>
<dbReference type="SMR" id="P58767"/>
<dbReference type="KEGG" id="ecg:E2348C_1314"/>
<dbReference type="HOGENOM" id="CLU_160040_2_3_6"/>
<dbReference type="Proteomes" id="UP000008205">
    <property type="component" value="Chromosome"/>
</dbReference>
<dbReference type="GO" id="GO:0005886">
    <property type="term" value="C:plasma membrane"/>
    <property type="evidence" value="ECO:0007669"/>
    <property type="project" value="UniProtKB-SubCell"/>
</dbReference>
<dbReference type="InterPro" id="IPR007341">
    <property type="entry name" value="Transgly_assoc"/>
</dbReference>
<dbReference type="PANTHER" id="PTHR33884">
    <property type="entry name" value="UPF0410 PROTEIN YMGE"/>
    <property type="match status" value="1"/>
</dbReference>
<dbReference type="PANTHER" id="PTHR33884:SF3">
    <property type="entry name" value="UPF0410 PROTEIN YMGE"/>
    <property type="match status" value="1"/>
</dbReference>
<dbReference type="Pfam" id="PF04226">
    <property type="entry name" value="Transgly_assoc"/>
    <property type="match status" value="1"/>
</dbReference>
<evidence type="ECO:0000255" key="1"/>
<evidence type="ECO:0000303" key="2">
    <source ref="1"/>
</evidence>
<evidence type="ECO:0000305" key="3"/>
<sequence length="84" mass="8675">MGIIAWIIFGLIAGIIAKLIMPGRDGGGFFLTCILGIVGAVVGGWLATMFGIGGSISGFNLHSFLVAVVGAILVLGVFRLLQRE</sequence>
<proteinExistence type="inferred from homology"/>
<reference key="1">
    <citation type="submission" date="1997-01" db="EMBL/GenBank/DDBJ databases">
        <authorList>
            <person name="Haigh R.D."/>
            <person name="Willliams P.H."/>
        </authorList>
    </citation>
    <scope>NUCLEOTIDE SEQUENCE [GENOMIC DNA]</scope>
</reference>
<reference key="2">
    <citation type="journal article" date="2009" name="J. Bacteriol.">
        <title>Complete genome sequence and comparative genome analysis of enteropathogenic Escherichia coli O127:H6 strain E2348/69.</title>
        <authorList>
            <person name="Iguchi A."/>
            <person name="Thomson N.R."/>
            <person name="Ogura Y."/>
            <person name="Saunders D."/>
            <person name="Ooka T."/>
            <person name="Henderson I.R."/>
            <person name="Harris D."/>
            <person name="Asadulghani M."/>
            <person name="Kurokawa K."/>
            <person name="Dean P."/>
            <person name="Kenny B."/>
            <person name="Quail M.A."/>
            <person name="Thurston S."/>
            <person name="Dougan G."/>
            <person name="Hayashi T."/>
            <person name="Parkhill J."/>
            <person name="Frankel G."/>
        </authorList>
    </citation>
    <scope>NUCLEOTIDE SEQUENCE [LARGE SCALE GENOMIC DNA]</scope>
    <source>
        <strain>E2348/69 / EPEC</strain>
    </source>
</reference>
<feature type="chain" id="PRO_0000072419" description="UPF0410 protein YmgE">
    <location>
        <begin position="1"/>
        <end position="84"/>
    </location>
</feature>
<feature type="transmembrane region" description="Helical" evidence="1">
    <location>
        <begin position="1"/>
        <end position="21"/>
    </location>
</feature>
<feature type="transmembrane region" description="Helical" evidence="1">
    <location>
        <begin position="27"/>
        <end position="47"/>
    </location>
</feature>
<feature type="transmembrane region" description="Helical" evidence="1">
    <location>
        <begin position="58"/>
        <end position="78"/>
    </location>
</feature>
<feature type="sequence conflict" description="In Ref. 1; AAB42090." evidence="3" ref="1">
    <original>H</original>
    <variation>D</variation>
    <location>
        <position position="62"/>
    </location>
</feature>
<keyword id="KW-0997">Cell inner membrane</keyword>
<keyword id="KW-1003">Cell membrane</keyword>
<keyword id="KW-0472">Membrane</keyword>
<keyword id="KW-1185">Reference proteome</keyword>
<keyword id="KW-0812">Transmembrane</keyword>
<keyword id="KW-1133">Transmembrane helix</keyword>
<name>YMGE_ECO27</name>
<comment type="subcellular location">
    <subcellularLocation>
        <location evidence="3">Cell inner membrane</location>
        <topology evidence="3">Multi-pass membrane protein</topology>
    </subcellularLocation>
</comment>
<comment type="similarity">
    <text evidence="3">Belongs to the UPF0410 family.</text>
</comment>
<protein>
    <recommendedName>
        <fullName>UPF0410 protein YmgE</fullName>
    </recommendedName>
    <alternativeName>
        <fullName evidence="2">Transglycosylase-associated gene protein</fullName>
    </alternativeName>
</protein>
<organism>
    <name type="scientific">Escherichia coli O127:H6 (strain E2348/69 / EPEC)</name>
    <dbReference type="NCBI Taxonomy" id="574521"/>
    <lineage>
        <taxon>Bacteria</taxon>
        <taxon>Pseudomonadati</taxon>
        <taxon>Pseudomonadota</taxon>
        <taxon>Gammaproteobacteria</taxon>
        <taxon>Enterobacterales</taxon>
        <taxon>Enterobacteriaceae</taxon>
        <taxon>Escherichia</taxon>
    </lineage>
</organism>